<name>DAPB_SHEPC</name>
<comment type="function">
    <text evidence="1">Catalyzes the conversion of 4-hydroxy-tetrahydrodipicolinate (HTPA) to tetrahydrodipicolinate.</text>
</comment>
<comment type="catalytic activity">
    <reaction evidence="1">
        <text>(S)-2,3,4,5-tetrahydrodipicolinate + NAD(+) + H2O = (2S,4S)-4-hydroxy-2,3,4,5-tetrahydrodipicolinate + NADH + H(+)</text>
        <dbReference type="Rhea" id="RHEA:35323"/>
        <dbReference type="ChEBI" id="CHEBI:15377"/>
        <dbReference type="ChEBI" id="CHEBI:15378"/>
        <dbReference type="ChEBI" id="CHEBI:16845"/>
        <dbReference type="ChEBI" id="CHEBI:57540"/>
        <dbReference type="ChEBI" id="CHEBI:57945"/>
        <dbReference type="ChEBI" id="CHEBI:67139"/>
        <dbReference type="EC" id="1.17.1.8"/>
    </reaction>
</comment>
<comment type="catalytic activity">
    <reaction evidence="1">
        <text>(S)-2,3,4,5-tetrahydrodipicolinate + NADP(+) + H2O = (2S,4S)-4-hydroxy-2,3,4,5-tetrahydrodipicolinate + NADPH + H(+)</text>
        <dbReference type="Rhea" id="RHEA:35331"/>
        <dbReference type="ChEBI" id="CHEBI:15377"/>
        <dbReference type="ChEBI" id="CHEBI:15378"/>
        <dbReference type="ChEBI" id="CHEBI:16845"/>
        <dbReference type="ChEBI" id="CHEBI:57783"/>
        <dbReference type="ChEBI" id="CHEBI:58349"/>
        <dbReference type="ChEBI" id="CHEBI:67139"/>
        <dbReference type="EC" id="1.17.1.8"/>
    </reaction>
</comment>
<comment type="pathway">
    <text evidence="1">Amino-acid biosynthesis; L-lysine biosynthesis via DAP pathway; (S)-tetrahydrodipicolinate from L-aspartate: step 4/4.</text>
</comment>
<comment type="subcellular location">
    <subcellularLocation>
        <location evidence="1">Cytoplasm</location>
    </subcellularLocation>
</comment>
<comment type="similarity">
    <text evidence="1">Belongs to the DapB family.</text>
</comment>
<comment type="caution">
    <text evidence="2">Was originally thought to be a dihydrodipicolinate reductase (DHDPR), catalyzing the conversion of dihydrodipicolinate to tetrahydrodipicolinate. However, it was shown in E.coli that the substrate of the enzymatic reaction is not dihydrodipicolinate (DHDP) but in fact (2S,4S)-4-hydroxy-2,3,4,5-tetrahydrodipicolinic acid (HTPA), the product released by the DapA-catalyzed reaction.</text>
</comment>
<gene>
    <name evidence="1" type="primary">dapB</name>
    <name type="ordered locus">Sputcn32_2941</name>
</gene>
<protein>
    <recommendedName>
        <fullName evidence="1">4-hydroxy-tetrahydrodipicolinate reductase</fullName>
        <shortName evidence="1">HTPA reductase</shortName>
        <ecNumber evidence="1">1.17.1.8</ecNumber>
    </recommendedName>
</protein>
<reference key="1">
    <citation type="submission" date="2007-04" db="EMBL/GenBank/DDBJ databases">
        <title>Complete sequence of Shewanella putrefaciens CN-32.</title>
        <authorList>
            <consortium name="US DOE Joint Genome Institute"/>
            <person name="Copeland A."/>
            <person name="Lucas S."/>
            <person name="Lapidus A."/>
            <person name="Barry K."/>
            <person name="Detter J.C."/>
            <person name="Glavina del Rio T."/>
            <person name="Hammon N."/>
            <person name="Israni S."/>
            <person name="Dalin E."/>
            <person name="Tice H."/>
            <person name="Pitluck S."/>
            <person name="Chain P."/>
            <person name="Malfatti S."/>
            <person name="Shin M."/>
            <person name="Vergez L."/>
            <person name="Schmutz J."/>
            <person name="Larimer F."/>
            <person name="Land M."/>
            <person name="Hauser L."/>
            <person name="Kyrpides N."/>
            <person name="Mikhailova N."/>
            <person name="Romine M.F."/>
            <person name="Fredrickson J."/>
            <person name="Tiedje J."/>
            <person name="Richardson P."/>
        </authorList>
    </citation>
    <scope>NUCLEOTIDE SEQUENCE [LARGE SCALE GENOMIC DNA]</scope>
    <source>
        <strain>CN-32 / ATCC BAA-453</strain>
    </source>
</reference>
<sequence length="270" mass="29188">MGGQVRVAIVGAGGRMGRTLIEAAYHQEHILLGAAIERAGSSLVGVDAGELAGVGKLNVIIMDSLDYATDDFDVLIDFTAPDASIVHLDWCVRHKKAMVIGTTGFNQAQKIQINAFAEQTPVVMAPNMSVGVNLMWKLLELAAEVMGDYTDIEIIEGHHRHKKDAPSGTALKMGEVIAKTLGRDLEKCAVYGREGITGERDRETIGFATIRAGDLVGEHTAMFADIGERLEITHKASSRMTFANGAMRAARWVVEQKPGLYDMQQVLGLN</sequence>
<feature type="chain" id="PRO_1000008637" description="4-hydroxy-tetrahydrodipicolinate reductase">
    <location>
        <begin position="1"/>
        <end position="270"/>
    </location>
</feature>
<feature type="active site" description="Proton donor/acceptor" evidence="1">
    <location>
        <position position="158"/>
    </location>
</feature>
<feature type="active site" description="Proton donor" evidence="1">
    <location>
        <position position="162"/>
    </location>
</feature>
<feature type="binding site" evidence="1">
    <location>
        <begin position="11"/>
        <end position="16"/>
    </location>
    <ligand>
        <name>NAD(+)</name>
        <dbReference type="ChEBI" id="CHEBI:57540"/>
    </ligand>
</feature>
<feature type="binding site" evidence="1">
    <location>
        <position position="37"/>
    </location>
    <ligand>
        <name>NAD(+)</name>
        <dbReference type="ChEBI" id="CHEBI:57540"/>
    </ligand>
</feature>
<feature type="binding site" evidence="1">
    <location>
        <position position="38"/>
    </location>
    <ligand>
        <name>NADP(+)</name>
        <dbReference type="ChEBI" id="CHEBI:58349"/>
    </ligand>
</feature>
<feature type="binding site" evidence="1">
    <location>
        <begin position="101"/>
        <end position="103"/>
    </location>
    <ligand>
        <name>NAD(+)</name>
        <dbReference type="ChEBI" id="CHEBI:57540"/>
    </ligand>
</feature>
<feature type="binding site" evidence="1">
    <location>
        <begin position="125"/>
        <end position="128"/>
    </location>
    <ligand>
        <name>NAD(+)</name>
        <dbReference type="ChEBI" id="CHEBI:57540"/>
    </ligand>
</feature>
<feature type="binding site" evidence="1">
    <location>
        <position position="159"/>
    </location>
    <ligand>
        <name>(S)-2,3,4,5-tetrahydrodipicolinate</name>
        <dbReference type="ChEBI" id="CHEBI:16845"/>
    </ligand>
</feature>
<feature type="binding site" evidence="1">
    <location>
        <begin position="168"/>
        <end position="169"/>
    </location>
    <ligand>
        <name>(S)-2,3,4,5-tetrahydrodipicolinate</name>
        <dbReference type="ChEBI" id="CHEBI:16845"/>
    </ligand>
</feature>
<dbReference type="EC" id="1.17.1.8" evidence="1"/>
<dbReference type="EMBL" id="CP000681">
    <property type="protein sequence ID" value="ABP76656.1"/>
    <property type="molecule type" value="Genomic_DNA"/>
</dbReference>
<dbReference type="SMR" id="A4Y9M3"/>
<dbReference type="STRING" id="319224.Sputcn32_2941"/>
<dbReference type="KEGG" id="spc:Sputcn32_2941"/>
<dbReference type="eggNOG" id="COG0289">
    <property type="taxonomic scope" value="Bacteria"/>
</dbReference>
<dbReference type="HOGENOM" id="CLU_047479_2_1_6"/>
<dbReference type="UniPathway" id="UPA00034">
    <property type="reaction ID" value="UER00018"/>
</dbReference>
<dbReference type="GO" id="GO:0005829">
    <property type="term" value="C:cytosol"/>
    <property type="evidence" value="ECO:0007669"/>
    <property type="project" value="TreeGrafter"/>
</dbReference>
<dbReference type="GO" id="GO:0008839">
    <property type="term" value="F:4-hydroxy-tetrahydrodipicolinate reductase"/>
    <property type="evidence" value="ECO:0007669"/>
    <property type="project" value="UniProtKB-EC"/>
</dbReference>
<dbReference type="GO" id="GO:0051287">
    <property type="term" value="F:NAD binding"/>
    <property type="evidence" value="ECO:0007669"/>
    <property type="project" value="UniProtKB-UniRule"/>
</dbReference>
<dbReference type="GO" id="GO:0050661">
    <property type="term" value="F:NADP binding"/>
    <property type="evidence" value="ECO:0007669"/>
    <property type="project" value="UniProtKB-UniRule"/>
</dbReference>
<dbReference type="GO" id="GO:0016726">
    <property type="term" value="F:oxidoreductase activity, acting on CH or CH2 groups, NAD or NADP as acceptor"/>
    <property type="evidence" value="ECO:0007669"/>
    <property type="project" value="UniProtKB-UniRule"/>
</dbReference>
<dbReference type="GO" id="GO:0019877">
    <property type="term" value="P:diaminopimelate biosynthetic process"/>
    <property type="evidence" value="ECO:0007669"/>
    <property type="project" value="UniProtKB-UniRule"/>
</dbReference>
<dbReference type="GO" id="GO:0009089">
    <property type="term" value="P:lysine biosynthetic process via diaminopimelate"/>
    <property type="evidence" value="ECO:0007669"/>
    <property type="project" value="UniProtKB-UniRule"/>
</dbReference>
<dbReference type="CDD" id="cd02274">
    <property type="entry name" value="DHDPR_N"/>
    <property type="match status" value="1"/>
</dbReference>
<dbReference type="FunFam" id="3.30.360.10:FF:000004">
    <property type="entry name" value="4-hydroxy-tetrahydrodipicolinate reductase"/>
    <property type="match status" value="1"/>
</dbReference>
<dbReference type="FunFam" id="3.40.50.720:FF:000048">
    <property type="entry name" value="4-hydroxy-tetrahydrodipicolinate reductase"/>
    <property type="match status" value="1"/>
</dbReference>
<dbReference type="Gene3D" id="3.30.360.10">
    <property type="entry name" value="Dihydrodipicolinate Reductase, domain 2"/>
    <property type="match status" value="1"/>
</dbReference>
<dbReference type="Gene3D" id="3.40.50.720">
    <property type="entry name" value="NAD(P)-binding Rossmann-like Domain"/>
    <property type="match status" value="1"/>
</dbReference>
<dbReference type="HAMAP" id="MF_00102">
    <property type="entry name" value="DapB"/>
    <property type="match status" value="1"/>
</dbReference>
<dbReference type="InterPro" id="IPR022663">
    <property type="entry name" value="DapB_C"/>
</dbReference>
<dbReference type="InterPro" id="IPR000846">
    <property type="entry name" value="DapB_N"/>
</dbReference>
<dbReference type="InterPro" id="IPR022664">
    <property type="entry name" value="DapB_N_CS"/>
</dbReference>
<dbReference type="InterPro" id="IPR023940">
    <property type="entry name" value="DHDPR_bac"/>
</dbReference>
<dbReference type="InterPro" id="IPR036291">
    <property type="entry name" value="NAD(P)-bd_dom_sf"/>
</dbReference>
<dbReference type="NCBIfam" id="TIGR00036">
    <property type="entry name" value="dapB"/>
    <property type="match status" value="1"/>
</dbReference>
<dbReference type="PANTHER" id="PTHR20836:SF0">
    <property type="entry name" value="4-HYDROXY-TETRAHYDRODIPICOLINATE REDUCTASE 1, CHLOROPLASTIC-RELATED"/>
    <property type="match status" value="1"/>
</dbReference>
<dbReference type="PANTHER" id="PTHR20836">
    <property type="entry name" value="DIHYDRODIPICOLINATE REDUCTASE"/>
    <property type="match status" value="1"/>
</dbReference>
<dbReference type="Pfam" id="PF05173">
    <property type="entry name" value="DapB_C"/>
    <property type="match status" value="1"/>
</dbReference>
<dbReference type="Pfam" id="PF01113">
    <property type="entry name" value="DapB_N"/>
    <property type="match status" value="1"/>
</dbReference>
<dbReference type="PIRSF" id="PIRSF000161">
    <property type="entry name" value="DHPR"/>
    <property type="match status" value="1"/>
</dbReference>
<dbReference type="SUPFAM" id="SSF55347">
    <property type="entry name" value="Glyceraldehyde-3-phosphate dehydrogenase-like, C-terminal domain"/>
    <property type="match status" value="1"/>
</dbReference>
<dbReference type="SUPFAM" id="SSF51735">
    <property type="entry name" value="NAD(P)-binding Rossmann-fold domains"/>
    <property type="match status" value="1"/>
</dbReference>
<dbReference type="PROSITE" id="PS01298">
    <property type="entry name" value="DAPB"/>
    <property type="match status" value="1"/>
</dbReference>
<proteinExistence type="inferred from homology"/>
<evidence type="ECO:0000255" key="1">
    <source>
        <dbReference type="HAMAP-Rule" id="MF_00102"/>
    </source>
</evidence>
<evidence type="ECO:0000305" key="2"/>
<organism>
    <name type="scientific">Shewanella putrefaciens (strain CN-32 / ATCC BAA-453)</name>
    <dbReference type="NCBI Taxonomy" id="319224"/>
    <lineage>
        <taxon>Bacteria</taxon>
        <taxon>Pseudomonadati</taxon>
        <taxon>Pseudomonadota</taxon>
        <taxon>Gammaproteobacteria</taxon>
        <taxon>Alteromonadales</taxon>
        <taxon>Shewanellaceae</taxon>
        <taxon>Shewanella</taxon>
    </lineage>
</organism>
<keyword id="KW-0028">Amino-acid biosynthesis</keyword>
<keyword id="KW-0963">Cytoplasm</keyword>
<keyword id="KW-0220">Diaminopimelate biosynthesis</keyword>
<keyword id="KW-0457">Lysine biosynthesis</keyword>
<keyword id="KW-0520">NAD</keyword>
<keyword id="KW-0521">NADP</keyword>
<keyword id="KW-0560">Oxidoreductase</keyword>
<accession>A4Y9M3</accession>